<name>FGL1L_CHICK</name>
<protein>
    <recommendedName>
        <fullName evidence="6">Fibrinogen-like protein 1-like protein</fullName>
    </recommendedName>
    <alternativeName>
        <fullName evidence="5">Cytidine deaminase</fullName>
        <shortName evidence="8">CDD</shortName>
    </alternativeName>
</protein>
<proteinExistence type="evidence at protein level"/>
<sequence length="281" mass="31298">MGLQAGTRQLHGNLILLPVAVVMLLLCTSPVCATASVGLPADCSRLTSSSPSGVYVIQPAQSPPRVVWCDMDTEGKGWTVVQRNTYSTEITWKESWTTYKYGFGNVQGDHWLGTEYLHLLTQQGTYKVRFVVRDKANVTHYAEYDIFRVESESSGYPLRLGRLLSSGKDYLTSYYSSYGGIHDNMKFSTVDKDQDQHSGNCASSYGGWWYDRCQNVLLNGKKYILWPEICPRVTACRPSSWSNPPMCADCARGWGSATIPSRSPSLPSPITATHTVRNQLQ</sequence>
<dbReference type="EMBL" id="AF059262">
    <property type="protein sequence ID" value="AAC64000.1"/>
    <property type="molecule type" value="mRNA"/>
</dbReference>
<dbReference type="EMBL" id="AADN03012049">
    <property type="status" value="NOT_ANNOTATED_CDS"/>
    <property type="molecule type" value="Genomic_DNA"/>
</dbReference>
<dbReference type="SMR" id="O93526"/>
<dbReference type="FunCoup" id="O93526">
    <property type="interactions" value="16"/>
</dbReference>
<dbReference type="STRING" id="9031.ENSGALP00000054413"/>
<dbReference type="PaxDb" id="9031-ENSGALP00000022348"/>
<dbReference type="VEuPathDB" id="HostDB:geneid_395773"/>
<dbReference type="eggNOG" id="KOG2579">
    <property type="taxonomic scope" value="Eukaryota"/>
</dbReference>
<dbReference type="InParanoid" id="O93526"/>
<dbReference type="Proteomes" id="UP000000539">
    <property type="component" value="Unassembled WGS sequence"/>
</dbReference>
<dbReference type="GO" id="GO:0062023">
    <property type="term" value="C:collagen-containing extracellular matrix"/>
    <property type="evidence" value="ECO:0000318"/>
    <property type="project" value="GO_Central"/>
</dbReference>
<dbReference type="GO" id="GO:0005615">
    <property type="term" value="C:extracellular space"/>
    <property type="evidence" value="ECO:0000318"/>
    <property type="project" value="GO_Central"/>
</dbReference>
<dbReference type="GO" id="GO:0004126">
    <property type="term" value="F:cytidine deaminase activity"/>
    <property type="evidence" value="ECO:0000314"/>
    <property type="project" value="UniProtKB"/>
</dbReference>
<dbReference type="CDD" id="cd00087">
    <property type="entry name" value="FReD"/>
    <property type="match status" value="1"/>
</dbReference>
<dbReference type="FunFam" id="3.90.215.10:FF:000018">
    <property type="entry name" value="Techylectin-5A"/>
    <property type="match status" value="1"/>
</dbReference>
<dbReference type="Gene3D" id="3.90.215.10">
    <property type="entry name" value="Gamma Fibrinogen, chain A, domain 1"/>
    <property type="match status" value="1"/>
</dbReference>
<dbReference type="Gene3D" id="4.10.530.10">
    <property type="entry name" value="Gamma-fibrinogen Carboxyl Terminal Fragment, domain 2"/>
    <property type="match status" value="1"/>
</dbReference>
<dbReference type="InterPro" id="IPR036056">
    <property type="entry name" value="Fibrinogen-like_C"/>
</dbReference>
<dbReference type="InterPro" id="IPR014716">
    <property type="entry name" value="Fibrinogen_a/b/g_C_1"/>
</dbReference>
<dbReference type="InterPro" id="IPR002181">
    <property type="entry name" value="Fibrinogen_a/b/g_C_dom"/>
</dbReference>
<dbReference type="InterPro" id="IPR050373">
    <property type="entry name" value="Fibrinogen_C-term_domain"/>
</dbReference>
<dbReference type="NCBIfam" id="NF040941">
    <property type="entry name" value="GGGWT_bact"/>
    <property type="match status" value="1"/>
</dbReference>
<dbReference type="PANTHER" id="PTHR19143:SF428">
    <property type="entry name" value="ANGIOPOIETIN-RELATED PROTEIN 1-LIKE-RELATED"/>
    <property type="match status" value="1"/>
</dbReference>
<dbReference type="PANTHER" id="PTHR19143">
    <property type="entry name" value="FIBRINOGEN/TENASCIN/ANGIOPOEITIN"/>
    <property type="match status" value="1"/>
</dbReference>
<dbReference type="Pfam" id="PF00147">
    <property type="entry name" value="Fibrinogen_C"/>
    <property type="match status" value="1"/>
</dbReference>
<dbReference type="SMART" id="SM00186">
    <property type="entry name" value="FBG"/>
    <property type="match status" value="1"/>
</dbReference>
<dbReference type="SUPFAM" id="SSF56496">
    <property type="entry name" value="Fibrinogen C-terminal domain-like"/>
    <property type="match status" value="1"/>
</dbReference>
<dbReference type="PROSITE" id="PS51406">
    <property type="entry name" value="FIBRINOGEN_C_2"/>
    <property type="match status" value="1"/>
</dbReference>
<evidence type="ECO:0000255" key="1"/>
<evidence type="ECO:0000255" key="2">
    <source>
        <dbReference type="PROSITE-ProRule" id="PRU00739"/>
    </source>
</evidence>
<evidence type="ECO:0000256" key="3">
    <source>
        <dbReference type="SAM" id="MobiDB-lite"/>
    </source>
</evidence>
<evidence type="ECO:0000269" key="4">
    <source>
    </source>
</evidence>
<evidence type="ECO:0000303" key="5">
    <source>
    </source>
</evidence>
<evidence type="ECO:0000305" key="6"/>
<evidence type="ECO:0000305" key="7">
    <source>
    </source>
</evidence>
<evidence type="ECO:0000312" key="8">
    <source>
        <dbReference type="EMBL" id="AAC64000.1"/>
    </source>
</evidence>
<feature type="signal peptide" evidence="1">
    <location>
        <begin position="1"/>
        <end position="33"/>
    </location>
</feature>
<feature type="chain" id="PRO_0000433469" description="Fibrinogen-like protein 1-like protein" evidence="1">
    <location>
        <begin position="34"/>
        <end position="281"/>
    </location>
</feature>
<feature type="domain" description="Fibrinogen C-terminal" evidence="2">
    <location>
        <begin position="34"/>
        <end position="246"/>
    </location>
</feature>
<feature type="region of interest" description="Disordered" evidence="3">
    <location>
        <begin position="260"/>
        <end position="281"/>
    </location>
</feature>
<feature type="compositionally biased region" description="Low complexity" evidence="3">
    <location>
        <begin position="260"/>
        <end position="269"/>
    </location>
</feature>
<feature type="compositionally biased region" description="Polar residues" evidence="3">
    <location>
        <begin position="270"/>
        <end position="281"/>
    </location>
</feature>
<feature type="disulfide bond" evidence="2">
    <location>
        <begin position="43"/>
        <end position="69"/>
    </location>
</feature>
<feature type="disulfide bond" evidence="2">
    <location>
        <begin position="201"/>
        <end position="213"/>
    </location>
</feature>
<feature type="mutagenesis site" description="Abolishes cytidine deaminase activity." evidence="4">
    <original>H</original>
    <variation>R</variation>
    <location>
        <position position="140"/>
    </location>
</feature>
<feature type="mutagenesis site" description="Abolishes cytidine deaminase activity." evidence="4">
    <original>E</original>
    <variation>Q</variation>
    <location>
        <position position="143"/>
    </location>
</feature>
<feature type="sequence conflict" description="In Ref. 1; AAC64000." evidence="6" ref="1">
    <original>N</original>
    <variation>D</variation>
    <location>
        <position position="105"/>
    </location>
</feature>
<feature type="sequence conflict" description="In Ref. 1; AAC64000." evidence="6" ref="1">
    <original>G</original>
    <variation>R</variation>
    <location>
        <position position="253"/>
    </location>
</feature>
<feature type="sequence conflict" description="In Ref. 1; AAC64000." evidence="6" ref="1">
    <original>T</original>
    <variation>I</variation>
    <location>
        <position position="271"/>
    </location>
</feature>
<feature type="sequence conflict" description="In Ref. 1; AAC64000." evidence="6" ref="1">
    <location>
        <position position="281"/>
    </location>
</feature>
<reference key="1">
    <citation type="journal article" date="1998" name="Biol. Chem.">
        <title>Evolutionary origins of the mammalian apolipoproteinB RNA editing enzyme, apobec-1: structural homology inferred from analysis of a cloned chicken small intestinal cytidine deaminase.</title>
        <authorList>
            <person name="Anant S."/>
            <person name="Yu H."/>
            <person name="Davidson N.O."/>
        </authorList>
    </citation>
    <scope>NUCLEOTIDE SEQUENCE [MRNA]</scope>
    <scope>FUNCTION</scope>
    <scope>TISSUE SPECIFICITY</scope>
    <scope>BIOPHYSICOCHEMICAL PROPERTIES</scope>
    <scope>MUTAGENESIS OF HIS-140 AND GLU-143</scope>
    <source>
        <tissue>Small intestine</tissue>
    </source>
</reference>
<reference key="2">
    <citation type="journal article" date="2004" name="Nature">
        <title>Sequence and comparative analysis of the chicken genome provide unique perspectives on vertebrate evolution.</title>
        <authorList>
            <person name="Hillier L.W."/>
            <person name="Miller W."/>
            <person name="Birney E."/>
            <person name="Warren W."/>
            <person name="Hardison R.C."/>
            <person name="Ponting C.P."/>
            <person name="Bork P."/>
            <person name="Burt D.W."/>
            <person name="Groenen M.A.M."/>
            <person name="Delany M.E."/>
            <person name="Dodgson J.B."/>
            <person name="Chinwalla A.T."/>
            <person name="Cliften P.F."/>
            <person name="Clifton S.W."/>
            <person name="Delehaunty K.D."/>
            <person name="Fronick C."/>
            <person name="Fulton R.S."/>
            <person name="Graves T.A."/>
            <person name="Kremitzki C."/>
            <person name="Layman D."/>
            <person name="Magrini V."/>
            <person name="McPherson J.D."/>
            <person name="Miner T.L."/>
            <person name="Minx P."/>
            <person name="Nash W.E."/>
            <person name="Nhan M.N."/>
            <person name="Nelson J.O."/>
            <person name="Oddy L.G."/>
            <person name="Pohl C.S."/>
            <person name="Randall-Maher J."/>
            <person name="Smith S.M."/>
            <person name="Wallis J.W."/>
            <person name="Yang S.-P."/>
            <person name="Romanov M.N."/>
            <person name="Rondelli C.M."/>
            <person name="Paton B."/>
            <person name="Smith J."/>
            <person name="Morrice D."/>
            <person name="Daniels L."/>
            <person name="Tempest H.G."/>
            <person name="Robertson L."/>
            <person name="Masabanda J.S."/>
            <person name="Griffin D.K."/>
            <person name="Vignal A."/>
            <person name="Fillon V."/>
            <person name="Jacobbson L."/>
            <person name="Kerje S."/>
            <person name="Andersson L."/>
            <person name="Crooijmans R.P."/>
            <person name="Aerts J."/>
            <person name="van der Poel J.J."/>
            <person name="Ellegren H."/>
            <person name="Caldwell R.B."/>
            <person name="Hubbard S.J."/>
            <person name="Grafham D.V."/>
            <person name="Kierzek A.M."/>
            <person name="McLaren S.R."/>
            <person name="Overton I.M."/>
            <person name="Arakawa H."/>
            <person name="Beattie K.J."/>
            <person name="Bezzubov Y."/>
            <person name="Boardman P.E."/>
            <person name="Bonfield J.K."/>
            <person name="Croning M.D.R."/>
            <person name="Davies R.M."/>
            <person name="Francis M.D."/>
            <person name="Humphray S.J."/>
            <person name="Scott C.E."/>
            <person name="Taylor R.G."/>
            <person name="Tickle C."/>
            <person name="Brown W.R.A."/>
            <person name="Rogers J."/>
            <person name="Buerstedde J.-M."/>
            <person name="Wilson S.A."/>
            <person name="Stubbs L."/>
            <person name="Ovcharenko I."/>
            <person name="Gordon L."/>
            <person name="Lucas S."/>
            <person name="Miller M.M."/>
            <person name="Inoko H."/>
            <person name="Shiina T."/>
            <person name="Kaufman J."/>
            <person name="Salomonsen J."/>
            <person name="Skjoedt K."/>
            <person name="Wong G.K.-S."/>
            <person name="Wang J."/>
            <person name="Liu B."/>
            <person name="Wang J."/>
            <person name="Yu J."/>
            <person name="Yang H."/>
            <person name="Nefedov M."/>
            <person name="Koriabine M."/>
            <person name="Dejong P.J."/>
            <person name="Goodstadt L."/>
            <person name="Webber C."/>
            <person name="Dickens N.J."/>
            <person name="Letunic I."/>
            <person name="Suyama M."/>
            <person name="Torrents D."/>
            <person name="von Mering C."/>
            <person name="Zdobnov E.M."/>
            <person name="Makova K."/>
            <person name="Nekrutenko A."/>
            <person name="Elnitski L."/>
            <person name="Eswara P."/>
            <person name="King D.C."/>
            <person name="Yang S.-P."/>
            <person name="Tyekucheva S."/>
            <person name="Radakrishnan A."/>
            <person name="Harris R.S."/>
            <person name="Chiaromonte F."/>
            <person name="Taylor J."/>
            <person name="He J."/>
            <person name="Rijnkels M."/>
            <person name="Griffiths-Jones S."/>
            <person name="Ureta-Vidal A."/>
            <person name="Hoffman M.M."/>
            <person name="Severin J."/>
            <person name="Searle S.M.J."/>
            <person name="Law A.S."/>
            <person name="Speed D."/>
            <person name="Waddington D."/>
            <person name="Cheng Z."/>
            <person name="Tuzun E."/>
            <person name="Eichler E."/>
            <person name="Bao Z."/>
            <person name="Flicek P."/>
            <person name="Shteynberg D.D."/>
            <person name="Brent M.R."/>
            <person name="Bye J.M."/>
            <person name="Huckle E.J."/>
            <person name="Chatterji S."/>
            <person name="Dewey C."/>
            <person name="Pachter L."/>
            <person name="Kouranov A."/>
            <person name="Mourelatos Z."/>
            <person name="Hatzigeorgiou A.G."/>
            <person name="Paterson A.H."/>
            <person name="Ivarie R."/>
            <person name="Brandstrom M."/>
            <person name="Axelsson E."/>
            <person name="Backstrom N."/>
            <person name="Berlin S."/>
            <person name="Webster M.T."/>
            <person name="Pourquie O."/>
            <person name="Reymond A."/>
            <person name="Ucla C."/>
            <person name="Antonarakis S.E."/>
            <person name="Long M."/>
            <person name="Emerson J.J."/>
            <person name="Betran E."/>
            <person name="Dupanloup I."/>
            <person name="Kaessmann H."/>
            <person name="Hinrichs A.S."/>
            <person name="Bejerano G."/>
            <person name="Furey T.S."/>
            <person name="Harte R.A."/>
            <person name="Raney B."/>
            <person name="Siepel A."/>
            <person name="Kent W.J."/>
            <person name="Haussler D."/>
            <person name="Eyras E."/>
            <person name="Castelo R."/>
            <person name="Abril J.F."/>
            <person name="Castellano S."/>
            <person name="Camara F."/>
            <person name="Parra G."/>
            <person name="Guigo R."/>
            <person name="Bourque G."/>
            <person name="Tesler G."/>
            <person name="Pevzner P.A."/>
            <person name="Smit A."/>
            <person name="Fulton L.A."/>
            <person name="Mardis E.R."/>
            <person name="Wilson R.K."/>
        </authorList>
    </citation>
    <scope>NUCLEOTIDE SEQUENCE [LARGE SCALE GENOMIC DNA]</scope>
    <source>
        <strain>Red jungle fowl</strain>
    </source>
</reference>
<comment type="function">
    <text evidence="4">Shows a cytidine deaminase activity on 2'-deoxycytidine (in vitro), however shows no RNA editing activity (in vitro).</text>
</comment>
<comment type="biophysicochemical properties">
    <kinetics>
        <KM evidence="4">0.22 uM for 2'-deoxycytidine</KM>
    </kinetics>
</comment>
<comment type="tissue specificity">
    <text evidence="4">Expressed in smal intestine, colon and lung.</text>
</comment>
<comment type="caution">
    <text evidence="7">Although in PubMed:9792440 a cytidine deaminase activity has been shown in vitro, it would be the first time that a member of this family that contains a fibrinogen C-terminal domain signature shows an enzymatic activity. And it is surprising that this protein that shows an in vitro cytidine deaminase activity does not have the cytidine and deoxycytidylate deaminases domain signature.</text>
</comment>
<organism>
    <name type="scientific">Gallus gallus</name>
    <name type="common">Chicken</name>
    <dbReference type="NCBI Taxonomy" id="9031"/>
    <lineage>
        <taxon>Eukaryota</taxon>
        <taxon>Metazoa</taxon>
        <taxon>Chordata</taxon>
        <taxon>Craniata</taxon>
        <taxon>Vertebrata</taxon>
        <taxon>Euteleostomi</taxon>
        <taxon>Archelosauria</taxon>
        <taxon>Archosauria</taxon>
        <taxon>Dinosauria</taxon>
        <taxon>Saurischia</taxon>
        <taxon>Theropoda</taxon>
        <taxon>Coelurosauria</taxon>
        <taxon>Aves</taxon>
        <taxon>Neognathae</taxon>
        <taxon>Galloanserae</taxon>
        <taxon>Galliformes</taxon>
        <taxon>Phasianidae</taxon>
        <taxon>Phasianinae</taxon>
        <taxon>Gallus</taxon>
    </lineage>
</organism>
<accession>O93526</accession>
<accession>F1P1D2</accession>
<keyword id="KW-1015">Disulfide bond</keyword>
<keyword id="KW-1185">Reference proteome</keyword>
<keyword id="KW-0732">Signal</keyword>